<keyword id="KW-0020">Allergen</keyword>
<keyword id="KW-0175">Coiled coil</keyword>
<keyword id="KW-1185">Reference proteome</keyword>
<keyword id="KW-0677">Repeat</keyword>
<reference key="1">
    <citation type="journal article" date="1998" name="Biochim. Biophys. Acta">
        <title>Sequencing and high level expression in Escherichia coli of the tropomyosin allergen (Der p 10) from Dermatophagoides pteronyssinus.</title>
        <authorList>
            <person name="Asturias J.A."/>
            <person name="Arilla M.C."/>
            <person name="Gomez-Bayon N."/>
            <person name="Martinez J."/>
            <person name="Martinez A."/>
            <person name="Palacios R."/>
        </authorList>
    </citation>
    <scope>NUCLEOTIDE SEQUENCE [MRNA]</scope>
</reference>
<reference key="2">
    <citation type="submission" date="1997-07" db="EMBL/GenBank/DDBJ databases">
        <authorList>
            <person name="Smith W."/>
            <person name="Mills K.L."/>
            <person name="Thomas W.R."/>
        </authorList>
    </citation>
    <scope>NUCLEOTIDE SEQUENCE [MRNA]</scope>
</reference>
<accession>O18416</accession>
<accession>O16188</accession>
<sequence>MEAIKNKMQAMKLEKDNAIDRAEIAEQKARDANLRAEKSEEEVRALQKKIQQIENELDQVQEQLSAANTKLEEKEKALQTAEGDVAALNRRIQLIEEDLERSEERLKIATAKLEEASQSADESERMRKMLEHRSITDEERMEGLENQLKEARMMAEDADRKYDEVARKLAMVEADLERAEERAETGESKIVELEEELRVVGNNLKSLEVSEEKAQQREEAHEQQIRIMTTKLKEAEARAEFAERSVQKLQKEVGRLEDELVHEKEKYKSISDELDQTFAELTGY</sequence>
<name>TPM_DERPT</name>
<organism>
    <name type="scientific">Dermatophagoides pteronyssinus</name>
    <name type="common">European house dust mite</name>
    <dbReference type="NCBI Taxonomy" id="6956"/>
    <lineage>
        <taxon>Eukaryota</taxon>
        <taxon>Metazoa</taxon>
        <taxon>Ecdysozoa</taxon>
        <taxon>Arthropoda</taxon>
        <taxon>Chelicerata</taxon>
        <taxon>Arachnida</taxon>
        <taxon>Acari</taxon>
        <taxon>Acariformes</taxon>
        <taxon>Sarcoptiformes</taxon>
        <taxon>Astigmata</taxon>
        <taxon>Psoroptidia</taxon>
        <taxon>Analgoidea</taxon>
        <taxon>Pyroglyphidae</taxon>
        <taxon>Dermatophagoidinae</taxon>
        <taxon>Dermatophagoides</taxon>
    </lineage>
</organism>
<proteinExistence type="evidence at protein level"/>
<comment type="function">
    <text>Tropomyosin, in association with the troponin complex, plays a central role in the calcium dependent regulation of muscle contraction.</text>
</comment>
<comment type="subunit">
    <text evidence="1">Homodimer.</text>
</comment>
<comment type="domain">
    <text>The molecule is in a coiled coil structure that is formed by 2 polypeptide chains. The sequence exhibits a prominent seven-residues periodicity.</text>
</comment>
<comment type="allergen">
    <text>Causes an allergic reaction in human. Binds to IgE.</text>
</comment>
<comment type="similarity">
    <text evidence="2">Belongs to the tropomyosin family.</text>
</comment>
<protein>
    <recommendedName>
        <fullName>Tropomyosin</fullName>
    </recommendedName>
    <allergenName>Der p 10</allergenName>
</protein>
<dbReference type="EMBL" id="Y14906">
    <property type="protein sequence ID" value="CAA75141.1"/>
    <property type="molecule type" value="mRNA"/>
</dbReference>
<dbReference type="EMBL" id="AF016278">
    <property type="protein sequence ID" value="AAB69424.1"/>
    <property type="molecule type" value="mRNA"/>
</dbReference>
<dbReference type="SMR" id="O18416"/>
<dbReference type="FunCoup" id="O18416">
    <property type="interactions" value="6"/>
</dbReference>
<dbReference type="Allergome" id="311">
    <property type="allergen name" value="Der p 10"/>
</dbReference>
<dbReference type="Allergome" id="3258">
    <property type="allergen name" value="Der p 10.0101"/>
</dbReference>
<dbReference type="InParanoid" id="O18416"/>
<dbReference type="OrthoDB" id="128924at2759"/>
<dbReference type="Proteomes" id="UP000515146">
    <property type="component" value="Unplaced"/>
</dbReference>
<dbReference type="FunFam" id="1.20.5.170:FF:000005">
    <property type="entry name" value="Tropomyosin alpha-1 chain"/>
    <property type="match status" value="1"/>
</dbReference>
<dbReference type="FunFam" id="1.20.5.170:FF:000001">
    <property type="entry name" value="Tropomyosin alpha-1 chain isoform 1"/>
    <property type="match status" value="1"/>
</dbReference>
<dbReference type="FunFam" id="1.20.5.340:FF:000001">
    <property type="entry name" value="Tropomyosin alpha-1 chain isoform 2"/>
    <property type="match status" value="1"/>
</dbReference>
<dbReference type="Gene3D" id="1.20.5.170">
    <property type="match status" value="2"/>
</dbReference>
<dbReference type="Gene3D" id="1.20.5.340">
    <property type="match status" value="1"/>
</dbReference>
<dbReference type="InterPro" id="IPR000533">
    <property type="entry name" value="Tropomyosin"/>
</dbReference>
<dbReference type="PANTHER" id="PTHR19269">
    <property type="entry name" value="TROPOMYOSIN"/>
    <property type="match status" value="1"/>
</dbReference>
<dbReference type="Pfam" id="PF00261">
    <property type="entry name" value="Tropomyosin"/>
    <property type="match status" value="1"/>
</dbReference>
<dbReference type="PRINTS" id="PR00194">
    <property type="entry name" value="TROPOMYOSIN"/>
</dbReference>
<dbReference type="SUPFAM" id="SSF57997">
    <property type="entry name" value="Tropomyosin"/>
    <property type="match status" value="1"/>
</dbReference>
<dbReference type="PROSITE" id="PS00326">
    <property type="entry name" value="TROPOMYOSIN"/>
    <property type="match status" value="1"/>
</dbReference>
<evidence type="ECO:0000250" key="1"/>
<evidence type="ECO:0000305" key="2"/>
<feature type="chain" id="PRO_0000205679" description="Tropomyosin">
    <location>
        <begin position="1"/>
        <end position="284"/>
    </location>
</feature>
<feature type="coiled-coil region" evidence="1">
    <location>
        <begin position="1"/>
        <end position="284"/>
    </location>
</feature>
<feature type="sequence conflict" description="In Ref. 2; AAB69424." evidence="2" ref="2">
    <original>N</original>
    <variation>K</variation>
    <location>
        <position position="6"/>
    </location>
</feature>
<feature type="sequence conflict" description="In Ref. 2; AAB69424." evidence="2" ref="2">
    <original>G</original>
    <variation>D</variation>
    <location>
        <position position="254"/>
    </location>
</feature>